<organism>
    <name type="scientific">Mesorhizobium japonicum (strain LMG 29417 / CECT 9101 / MAFF 303099)</name>
    <name type="common">Mesorhizobium loti (strain MAFF 303099)</name>
    <dbReference type="NCBI Taxonomy" id="266835"/>
    <lineage>
        <taxon>Bacteria</taxon>
        <taxon>Pseudomonadati</taxon>
        <taxon>Pseudomonadota</taxon>
        <taxon>Alphaproteobacteria</taxon>
        <taxon>Hyphomicrobiales</taxon>
        <taxon>Phyllobacteriaceae</taxon>
        <taxon>Mesorhizobium</taxon>
    </lineage>
</organism>
<feature type="chain" id="PRO_0000148827" description="Aspartyl/glutamyl-tRNA(Asn/Gln) amidotransferase subunit B">
    <location>
        <begin position="1"/>
        <end position="499"/>
    </location>
</feature>
<keyword id="KW-0067">ATP-binding</keyword>
<keyword id="KW-0436">Ligase</keyword>
<keyword id="KW-0547">Nucleotide-binding</keyword>
<keyword id="KW-0648">Protein biosynthesis</keyword>
<proteinExistence type="inferred from homology"/>
<protein>
    <recommendedName>
        <fullName evidence="1">Aspartyl/glutamyl-tRNA(Asn/Gln) amidotransferase subunit B</fullName>
        <shortName evidence="1">Asp/Glu-ADT subunit B</shortName>
        <ecNumber evidence="1">6.3.5.-</ecNumber>
    </recommendedName>
</protein>
<reference key="1">
    <citation type="journal article" date="2000" name="DNA Res.">
        <title>Complete genome structure of the nitrogen-fixing symbiotic bacterium Mesorhizobium loti.</title>
        <authorList>
            <person name="Kaneko T."/>
            <person name="Nakamura Y."/>
            <person name="Sato S."/>
            <person name="Asamizu E."/>
            <person name="Kato T."/>
            <person name="Sasamoto S."/>
            <person name="Watanabe A."/>
            <person name="Idesawa K."/>
            <person name="Ishikawa A."/>
            <person name="Kawashima K."/>
            <person name="Kimura T."/>
            <person name="Kishida Y."/>
            <person name="Kiyokawa C."/>
            <person name="Kohara M."/>
            <person name="Matsumoto M."/>
            <person name="Matsuno A."/>
            <person name="Mochizuki Y."/>
            <person name="Nakayama S."/>
            <person name="Nakazaki N."/>
            <person name="Shimpo S."/>
            <person name="Sugimoto M."/>
            <person name="Takeuchi C."/>
            <person name="Yamada M."/>
            <person name="Tabata S."/>
        </authorList>
    </citation>
    <scope>NUCLEOTIDE SEQUENCE [LARGE SCALE GENOMIC DNA]</scope>
    <source>
        <strain>LMG 29417 / CECT 9101 / MAFF 303099</strain>
    </source>
</reference>
<comment type="function">
    <text evidence="1">Allows the formation of correctly charged Asn-tRNA(Asn) or Gln-tRNA(Gln) through the transamidation of misacylated Asp-tRNA(Asn) or Glu-tRNA(Gln) in organisms which lack either or both of asparaginyl-tRNA or glutaminyl-tRNA synthetases. The reaction takes place in the presence of glutamine and ATP through an activated phospho-Asp-tRNA(Asn) or phospho-Glu-tRNA(Gln).</text>
</comment>
<comment type="catalytic activity">
    <reaction evidence="1">
        <text>L-glutamyl-tRNA(Gln) + L-glutamine + ATP + H2O = L-glutaminyl-tRNA(Gln) + L-glutamate + ADP + phosphate + H(+)</text>
        <dbReference type="Rhea" id="RHEA:17521"/>
        <dbReference type="Rhea" id="RHEA-COMP:9681"/>
        <dbReference type="Rhea" id="RHEA-COMP:9684"/>
        <dbReference type="ChEBI" id="CHEBI:15377"/>
        <dbReference type="ChEBI" id="CHEBI:15378"/>
        <dbReference type="ChEBI" id="CHEBI:29985"/>
        <dbReference type="ChEBI" id="CHEBI:30616"/>
        <dbReference type="ChEBI" id="CHEBI:43474"/>
        <dbReference type="ChEBI" id="CHEBI:58359"/>
        <dbReference type="ChEBI" id="CHEBI:78520"/>
        <dbReference type="ChEBI" id="CHEBI:78521"/>
        <dbReference type="ChEBI" id="CHEBI:456216"/>
    </reaction>
</comment>
<comment type="catalytic activity">
    <reaction evidence="1">
        <text>L-aspartyl-tRNA(Asn) + L-glutamine + ATP + H2O = L-asparaginyl-tRNA(Asn) + L-glutamate + ADP + phosphate + 2 H(+)</text>
        <dbReference type="Rhea" id="RHEA:14513"/>
        <dbReference type="Rhea" id="RHEA-COMP:9674"/>
        <dbReference type="Rhea" id="RHEA-COMP:9677"/>
        <dbReference type="ChEBI" id="CHEBI:15377"/>
        <dbReference type="ChEBI" id="CHEBI:15378"/>
        <dbReference type="ChEBI" id="CHEBI:29985"/>
        <dbReference type="ChEBI" id="CHEBI:30616"/>
        <dbReference type="ChEBI" id="CHEBI:43474"/>
        <dbReference type="ChEBI" id="CHEBI:58359"/>
        <dbReference type="ChEBI" id="CHEBI:78515"/>
        <dbReference type="ChEBI" id="CHEBI:78516"/>
        <dbReference type="ChEBI" id="CHEBI:456216"/>
    </reaction>
</comment>
<comment type="subunit">
    <text evidence="1">Heterotrimer of A, B and C subunits.</text>
</comment>
<comment type="similarity">
    <text evidence="1">Belongs to the GatB/GatE family. GatB subfamily.</text>
</comment>
<accession>Q98ND3</accession>
<gene>
    <name evidence="1" type="primary">gatB</name>
    <name type="ordered locus">mlr0190</name>
</gene>
<sequence length="499" mass="54492">MTIIDTRTPDAKRLIPGATGDWEIIIGLEVHAQVISEAKLFSGASTAFGAAPNANVSLVDAAMPGMLPVINEECVKQAIRTGLGLKAQINHKSVFDRKNYFYPDLPQGYQISQFKQPIVGEGTVIVSVGPDRQGEFEDIEVGIERLHLEQDAGKSMHDQHPTMSYVDLNRSGVALMEIVSKPDLRSGDEAKAYVTKLRTIMRYLGTCDGNMDEGSLRADVNVSVRRPGGEFGTRCEIKNMNSIRFIGQAIDYEARRQIAILEDGGKIDQETRLYDAVKGETRSMRSKEEAHDYRYFPDPDLLPLEFDQAYVDALAKELPELPDDKKARLITSLGLSTYDASILVSEKSVADYFEKVAAGRDGKLAANWVINDLLGQLNKVGKDIENAPVSPDQLGAIIDLIKDGTISGKIAKDLFEIVWSEGGDPRALVESRGMKQVTDTGAIEKAVDEVIAANPDKVEQARAKPTMAGWFVGQVMKATGGKANPQAVNDLVKAKLGIE</sequence>
<dbReference type="EC" id="6.3.5.-" evidence="1"/>
<dbReference type="EMBL" id="BA000012">
    <property type="protein sequence ID" value="BAB47828.1"/>
    <property type="molecule type" value="Genomic_DNA"/>
</dbReference>
<dbReference type="RefSeq" id="WP_010909198.1">
    <property type="nucleotide sequence ID" value="NC_002678.2"/>
</dbReference>
<dbReference type="SMR" id="Q98ND3"/>
<dbReference type="KEGG" id="mlo:mlr0190"/>
<dbReference type="PATRIC" id="fig|266835.9.peg.149"/>
<dbReference type="eggNOG" id="COG0064">
    <property type="taxonomic scope" value="Bacteria"/>
</dbReference>
<dbReference type="HOGENOM" id="CLU_019240_0_0_5"/>
<dbReference type="Proteomes" id="UP000000552">
    <property type="component" value="Chromosome"/>
</dbReference>
<dbReference type="GO" id="GO:0050566">
    <property type="term" value="F:asparaginyl-tRNA synthase (glutamine-hydrolyzing) activity"/>
    <property type="evidence" value="ECO:0007669"/>
    <property type="project" value="RHEA"/>
</dbReference>
<dbReference type="GO" id="GO:0005524">
    <property type="term" value="F:ATP binding"/>
    <property type="evidence" value="ECO:0007669"/>
    <property type="project" value="UniProtKB-KW"/>
</dbReference>
<dbReference type="GO" id="GO:0050567">
    <property type="term" value="F:glutaminyl-tRNA synthase (glutamine-hydrolyzing) activity"/>
    <property type="evidence" value="ECO:0007669"/>
    <property type="project" value="UniProtKB-UniRule"/>
</dbReference>
<dbReference type="GO" id="GO:0070681">
    <property type="term" value="P:glutaminyl-tRNAGln biosynthesis via transamidation"/>
    <property type="evidence" value="ECO:0007669"/>
    <property type="project" value="TreeGrafter"/>
</dbReference>
<dbReference type="GO" id="GO:0006412">
    <property type="term" value="P:translation"/>
    <property type="evidence" value="ECO:0007669"/>
    <property type="project" value="UniProtKB-UniRule"/>
</dbReference>
<dbReference type="FunFam" id="1.10.10.410:FF:000001">
    <property type="entry name" value="Aspartyl/glutamyl-tRNA(Asn/Gln) amidotransferase subunit B"/>
    <property type="match status" value="1"/>
</dbReference>
<dbReference type="FunFam" id="1.10.150.380:FF:000001">
    <property type="entry name" value="Aspartyl/glutamyl-tRNA(Asn/Gln) amidotransferase subunit B"/>
    <property type="match status" value="1"/>
</dbReference>
<dbReference type="Gene3D" id="1.10.10.410">
    <property type="match status" value="1"/>
</dbReference>
<dbReference type="Gene3D" id="1.10.150.380">
    <property type="entry name" value="GatB domain, N-terminal subdomain"/>
    <property type="match status" value="1"/>
</dbReference>
<dbReference type="HAMAP" id="MF_00121">
    <property type="entry name" value="GatB"/>
    <property type="match status" value="1"/>
</dbReference>
<dbReference type="InterPro" id="IPR017959">
    <property type="entry name" value="Asn/Gln-tRNA_amidoTrfase_suB/E"/>
</dbReference>
<dbReference type="InterPro" id="IPR006075">
    <property type="entry name" value="Asn/Gln-tRNA_Trfase_suB/E_cat"/>
</dbReference>
<dbReference type="InterPro" id="IPR018027">
    <property type="entry name" value="Asn/Gln_amidotransferase"/>
</dbReference>
<dbReference type="InterPro" id="IPR003789">
    <property type="entry name" value="Asn/Gln_tRNA_amidoTrase-B-like"/>
</dbReference>
<dbReference type="InterPro" id="IPR004413">
    <property type="entry name" value="GatB"/>
</dbReference>
<dbReference type="InterPro" id="IPR042114">
    <property type="entry name" value="GatB_C_1"/>
</dbReference>
<dbReference type="InterPro" id="IPR023168">
    <property type="entry name" value="GatB_Yqey_C_2"/>
</dbReference>
<dbReference type="InterPro" id="IPR017958">
    <property type="entry name" value="Gln-tRNA_amidoTrfase_suB_CS"/>
</dbReference>
<dbReference type="InterPro" id="IPR014746">
    <property type="entry name" value="Gln_synth/guanido_kin_cat_dom"/>
</dbReference>
<dbReference type="NCBIfam" id="TIGR00133">
    <property type="entry name" value="gatB"/>
    <property type="match status" value="1"/>
</dbReference>
<dbReference type="NCBIfam" id="NF004012">
    <property type="entry name" value="PRK05477.1-2"/>
    <property type="match status" value="1"/>
</dbReference>
<dbReference type="NCBIfam" id="NF004014">
    <property type="entry name" value="PRK05477.1-4"/>
    <property type="match status" value="1"/>
</dbReference>
<dbReference type="NCBIfam" id="NF004015">
    <property type="entry name" value="PRK05477.1-5"/>
    <property type="match status" value="1"/>
</dbReference>
<dbReference type="PANTHER" id="PTHR11659">
    <property type="entry name" value="GLUTAMYL-TRNA GLN AMIDOTRANSFERASE SUBUNIT B MITOCHONDRIAL AND PROKARYOTIC PET112-RELATED"/>
    <property type="match status" value="1"/>
</dbReference>
<dbReference type="PANTHER" id="PTHR11659:SF0">
    <property type="entry name" value="GLUTAMYL-TRNA(GLN) AMIDOTRANSFERASE SUBUNIT B, MITOCHONDRIAL"/>
    <property type="match status" value="1"/>
</dbReference>
<dbReference type="Pfam" id="PF02934">
    <property type="entry name" value="GatB_N"/>
    <property type="match status" value="1"/>
</dbReference>
<dbReference type="Pfam" id="PF02637">
    <property type="entry name" value="GatB_Yqey"/>
    <property type="match status" value="1"/>
</dbReference>
<dbReference type="SMART" id="SM00845">
    <property type="entry name" value="GatB_Yqey"/>
    <property type="match status" value="1"/>
</dbReference>
<dbReference type="SUPFAM" id="SSF89095">
    <property type="entry name" value="GatB/YqeY motif"/>
    <property type="match status" value="1"/>
</dbReference>
<dbReference type="SUPFAM" id="SSF55931">
    <property type="entry name" value="Glutamine synthetase/guanido kinase"/>
    <property type="match status" value="1"/>
</dbReference>
<dbReference type="PROSITE" id="PS01234">
    <property type="entry name" value="GATB"/>
    <property type="match status" value="1"/>
</dbReference>
<evidence type="ECO:0000255" key="1">
    <source>
        <dbReference type="HAMAP-Rule" id="MF_00121"/>
    </source>
</evidence>
<name>GATB_RHILO</name>